<reference key="1">
    <citation type="journal article" date="2006" name="Proc. Natl. Acad. Sci. U.S.A.">
        <title>Genome reduction in Leptospira borgpetersenii reflects limited transmission potential.</title>
        <authorList>
            <person name="Bulach D.M."/>
            <person name="Zuerner R.L."/>
            <person name="Wilson P."/>
            <person name="Seemann T."/>
            <person name="McGrath A."/>
            <person name="Cullen P.A."/>
            <person name="Davis J."/>
            <person name="Johnson M."/>
            <person name="Kuczek E."/>
            <person name="Alt D.P."/>
            <person name="Peterson-Burch B."/>
            <person name="Coppel R.L."/>
            <person name="Rood J.I."/>
            <person name="Davies J.K."/>
            <person name="Adler B."/>
        </authorList>
    </citation>
    <scope>NUCLEOTIDE SEQUENCE [LARGE SCALE GENOMIC DNA]</scope>
    <source>
        <strain>JB197</strain>
    </source>
</reference>
<comment type="function">
    <text evidence="1">Binds the lower part of the 30S subunit head. Binds mRNA in the 70S ribosome, positioning it for translation.</text>
</comment>
<comment type="subunit">
    <text evidence="1">Part of the 30S ribosomal subunit. Forms a tight complex with proteins S10 and S14.</text>
</comment>
<comment type="similarity">
    <text evidence="1">Belongs to the universal ribosomal protein uS3 family.</text>
</comment>
<name>RS3_LEPBJ</name>
<evidence type="ECO:0000255" key="1">
    <source>
        <dbReference type="HAMAP-Rule" id="MF_01309"/>
    </source>
</evidence>
<evidence type="ECO:0000305" key="2"/>
<gene>
    <name evidence="1" type="primary">rpsC</name>
    <name type="ordered locus">LBJ_2653</name>
</gene>
<proteinExistence type="inferred from homology"/>
<protein>
    <recommendedName>
        <fullName evidence="1">Small ribosomal subunit protein uS3</fullName>
    </recommendedName>
    <alternativeName>
        <fullName evidence="2">30S ribosomal protein S3</fullName>
    </alternativeName>
</protein>
<accession>Q04PU4</accession>
<feature type="chain" id="PRO_0000293815" description="Small ribosomal subunit protein uS3">
    <location>
        <begin position="1"/>
        <end position="225"/>
    </location>
</feature>
<feature type="domain" description="KH type-2" evidence="1">
    <location>
        <begin position="38"/>
        <end position="106"/>
    </location>
</feature>
<dbReference type="EMBL" id="CP000350">
    <property type="protein sequence ID" value="ABJ77076.1"/>
    <property type="molecule type" value="Genomic_DNA"/>
</dbReference>
<dbReference type="RefSeq" id="WP_002722992.1">
    <property type="nucleotide sequence ID" value="NC_008510.1"/>
</dbReference>
<dbReference type="SMR" id="Q04PU4"/>
<dbReference type="GeneID" id="61172956"/>
<dbReference type="KEGG" id="lbj:LBJ_2653"/>
<dbReference type="HOGENOM" id="CLU_058591_0_2_12"/>
<dbReference type="Proteomes" id="UP000000656">
    <property type="component" value="Chromosome 1"/>
</dbReference>
<dbReference type="GO" id="GO:0022627">
    <property type="term" value="C:cytosolic small ribosomal subunit"/>
    <property type="evidence" value="ECO:0007669"/>
    <property type="project" value="TreeGrafter"/>
</dbReference>
<dbReference type="GO" id="GO:0003729">
    <property type="term" value="F:mRNA binding"/>
    <property type="evidence" value="ECO:0007669"/>
    <property type="project" value="UniProtKB-UniRule"/>
</dbReference>
<dbReference type="GO" id="GO:0019843">
    <property type="term" value="F:rRNA binding"/>
    <property type="evidence" value="ECO:0007669"/>
    <property type="project" value="UniProtKB-UniRule"/>
</dbReference>
<dbReference type="GO" id="GO:0003735">
    <property type="term" value="F:structural constituent of ribosome"/>
    <property type="evidence" value="ECO:0007669"/>
    <property type="project" value="InterPro"/>
</dbReference>
<dbReference type="GO" id="GO:0006412">
    <property type="term" value="P:translation"/>
    <property type="evidence" value="ECO:0007669"/>
    <property type="project" value="UniProtKB-UniRule"/>
</dbReference>
<dbReference type="CDD" id="cd02412">
    <property type="entry name" value="KH-II_30S_S3"/>
    <property type="match status" value="1"/>
</dbReference>
<dbReference type="FunFam" id="3.30.1140.32:FF:000010">
    <property type="entry name" value="30S ribosomal protein S3"/>
    <property type="match status" value="1"/>
</dbReference>
<dbReference type="FunFam" id="3.30.300.20:FF:000001">
    <property type="entry name" value="30S ribosomal protein S3"/>
    <property type="match status" value="1"/>
</dbReference>
<dbReference type="Gene3D" id="3.30.300.20">
    <property type="match status" value="1"/>
</dbReference>
<dbReference type="Gene3D" id="3.30.1140.32">
    <property type="entry name" value="Ribosomal protein S3, C-terminal domain"/>
    <property type="match status" value="1"/>
</dbReference>
<dbReference type="HAMAP" id="MF_01309_B">
    <property type="entry name" value="Ribosomal_uS3_B"/>
    <property type="match status" value="1"/>
</dbReference>
<dbReference type="InterPro" id="IPR004087">
    <property type="entry name" value="KH_dom"/>
</dbReference>
<dbReference type="InterPro" id="IPR015946">
    <property type="entry name" value="KH_dom-like_a/b"/>
</dbReference>
<dbReference type="InterPro" id="IPR004044">
    <property type="entry name" value="KH_dom_type_2"/>
</dbReference>
<dbReference type="InterPro" id="IPR009019">
    <property type="entry name" value="KH_sf_prok-type"/>
</dbReference>
<dbReference type="InterPro" id="IPR036419">
    <property type="entry name" value="Ribosomal_S3_C_sf"/>
</dbReference>
<dbReference type="InterPro" id="IPR005704">
    <property type="entry name" value="Ribosomal_uS3_bac-typ"/>
</dbReference>
<dbReference type="InterPro" id="IPR001351">
    <property type="entry name" value="Ribosomal_uS3_C"/>
</dbReference>
<dbReference type="InterPro" id="IPR018280">
    <property type="entry name" value="Ribosomal_uS3_CS"/>
</dbReference>
<dbReference type="NCBIfam" id="TIGR01009">
    <property type="entry name" value="rpsC_bact"/>
    <property type="match status" value="1"/>
</dbReference>
<dbReference type="PANTHER" id="PTHR11760">
    <property type="entry name" value="30S/40S RIBOSOMAL PROTEIN S3"/>
    <property type="match status" value="1"/>
</dbReference>
<dbReference type="PANTHER" id="PTHR11760:SF19">
    <property type="entry name" value="SMALL RIBOSOMAL SUBUNIT PROTEIN US3C"/>
    <property type="match status" value="1"/>
</dbReference>
<dbReference type="Pfam" id="PF07650">
    <property type="entry name" value="KH_2"/>
    <property type="match status" value="1"/>
</dbReference>
<dbReference type="Pfam" id="PF00189">
    <property type="entry name" value="Ribosomal_S3_C"/>
    <property type="match status" value="1"/>
</dbReference>
<dbReference type="SMART" id="SM00322">
    <property type="entry name" value="KH"/>
    <property type="match status" value="1"/>
</dbReference>
<dbReference type="SUPFAM" id="SSF54814">
    <property type="entry name" value="Prokaryotic type KH domain (KH-domain type II)"/>
    <property type="match status" value="1"/>
</dbReference>
<dbReference type="SUPFAM" id="SSF54821">
    <property type="entry name" value="Ribosomal protein S3 C-terminal domain"/>
    <property type="match status" value="1"/>
</dbReference>
<dbReference type="PROSITE" id="PS50823">
    <property type="entry name" value="KH_TYPE_2"/>
    <property type="match status" value="1"/>
</dbReference>
<dbReference type="PROSITE" id="PS00548">
    <property type="entry name" value="RIBOSOMAL_S3"/>
    <property type="match status" value="1"/>
</dbReference>
<organism>
    <name type="scientific">Leptospira borgpetersenii serovar Hardjo-bovis (strain JB197)</name>
    <dbReference type="NCBI Taxonomy" id="355277"/>
    <lineage>
        <taxon>Bacteria</taxon>
        <taxon>Pseudomonadati</taxon>
        <taxon>Spirochaetota</taxon>
        <taxon>Spirochaetia</taxon>
        <taxon>Leptospirales</taxon>
        <taxon>Leptospiraceae</taxon>
        <taxon>Leptospira</taxon>
    </lineage>
</organism>
<sequence length="225" mass="25662">MGQKVNPIGLRIGITRGWDSIWFSQSDYKKNLHEDIKIRKFIQSRFSNAGVVKVVIERFPEKINVNLHTAKPGIVIGQKGSNIEAVKKILKTMTEKPVNLNIIEVKKPETVAQCIAESIALQIEQRQPFRRVMKQELRRAMRGGVEGIKILISGRLNGADMARRENYKEGRIPLHTLRAKIDLGFKEAKTTFGQIGVKVWTYSGDFIQSKEESEEDKYAVKRRTS</sequence>
<keyword id="KW-0687">Ribonucleoprotein</keyword>
<keyword id="KW-0689">Ribosomal protein</keyword>
<keyword id="KW-0694">RNA-binding</keyword>
<keyword id="KW-0699">rRNA-binding</keyword>